<name>SYN_ALKMQ</name>
<organism>
    <name type="scientific">Alkaliphilus metalliredigens (strain QYMF)</name>
    <dbReference type="NCBI Taxonomy" id="293826"/>
    <lineage>
        <taxon>Bacteria</taxon>
        <taxon>Bacillati</taxon>
        <taxon>Bacillota</taxon>
        <taxon>Clostridia</taxon>
        <taxon>Peptostreptococcales</taxon>
        <taxon>Natronincolaceae</taxon>
        <taxon>Alkaliphilus</taxon>
    </lineage>
</organism>
<proteinExistence type="inferred from homology"/>
<sequence>MKTVSVKEIYRQTEQYAGQSIRVEGWIRTLRASKAFGFIELNDGTFFKNIQIVFDEDLHNFSDVSKFTISSAIIIEGTLEITPGAKQPFEIKATNVELEAHSHKDYPLQKKRHTFEYLRQIAHLRPRSNAFSAVFRVRSIAAFAIHQFFQEKGFVYTHTPIVTGSDAEGAGEMFRVSTLDFKNIPLDEEQQVDFKKDFFGKETSLTVSGQLAAEAYALAFKKVYTFGPTFRAENSNTARHASEFWMIEPEIAFADLQDNMELAEDMLKYMIRYVMEQAPEELEFFNQFVDKGLIDRLNHVANSEFGKVTYTEAVKMLQESGEEFEYPVEWGHDLQTEHERYLTEKVFKKPVFVMDYPKDIKAFYMRMNDDNKTVAAMDLLVPGIGEIIGGSQREERLDVLTDRMKQMGLDEEEYWWYLELRKYGGVKHAGYGLGFERAIMYLTGMANIRDVISYPRTPKSAEF</sequence>
<reference key="1">
    <citation type="journal article" date="2016" name="Genome Announc.">
        <title>Complete genome sequence of Alkaliphilus metalliredigens strain QYMF, an alkaliphilic and metal-reducing bacterium isolated from borax-contaminated leachate ponds.</title>
        <authorList>
            <person name="Hwang C."/>
            <person name="Copeland A."/>
            <person name="Lucas S."/>
            <person name="Lapidus A."/>
            <person name="Barry K."/>
            <person name="Detter J.C."/>
            <person name="Glavina Del Rio T."/>
            <person name="Hammon N."/>
            <person name="Israni S."/>
            <person name="Dalin E."/>
            <person name="Tice H."/>
            <person name="Pitluck S."/>
            <person name="Chertkov O."/>
            <person name="Brettin T."/>
            <person name="Bruce D."/>
            <person name="Han C."/>
            <person name="Schmutz J."/>
            <person name="Larimer F."/>
            <person name="Land M.L."/>
            <person name="Hauser L."/>
            <person name="Kyrpides N."/>
            <person name="Mikhailova N."/>
            <person name="Ye Q."/>
            <person name="Zhou J."/>
            <person name="Richardson P."/>
            <person name="Fields M.W."/>
        </authorList>
    </citation>
    <scope>NUCLEOTIDE SEQUENCE [LARGE SCALE GENOMIC DNA]</scope>
    <source>
        <strain>QYMF</strain>
    </source>
</reference>
<accession>A6TVS9</accession>
<dbReference type="EC" id="6.1.1.22" evidence="1"/>
<dbReference type="EMBL" id="CP000724">
    <property type="protein sequence ID" value="ABR50297.1"/>
    <property type="molecule type" value="Genomic_DNA"/>
</dbReference>
<dbReference type="RefSeq" id="WP_012065245.1">
    <property type="nucleotide sequence ID" value="NC_009633.1"/>
</dbReference>
<dbReference type="SMR" id="A6TVS9"/>
<dbReference type="STRING" id="293826.Amet_4217"/>
<dbReference type="KEGG" id="amt:Amet_4217"/>
<dbReference type="eggNOG" id="COG0017">
    <property type="taxonomic scope" value="Bacteria"/>
</dbReference>
<dbReference type="HOGENOM" id="CLU_004553_2_0_9"/>
<dbReference type="OrthoDB" id="9762036at2"/>
<dbReference type="Proteomes" id="UP000001572">
    <property type="component" value="Chromosome"/>
</dbReference>
<dbReference type="GO" id="GO:0005737">
    <property type="term" value="C:cytoplasm"/>
    <property type="evidence" value="ECO:0007669"/>
    <property type="project" value="UniProtKB-SubCell"/>
</dbReference>
<dbReference type="GO" id="GO:0004816">
    <property type="term" value="F:asparagine-tRNA ligase activity"/>
    <property type="evidence" value="ECO:0007669"/>
    <property type="project" value="UniProtKB-UniRule"/>
</dbReference>
<dbReference type="GO" id="GO:0005524">
    <property type="term" value="F:ATP binding"/>
    <property type="evidence" value="ECO:0007669"/>
    <property type="project" value="UniProtKB-UniRule"/>
</dbReference>
<dbReference type="GO" id="GO:0140096">
    <property type="term" value="F:catalytic activity, acting on a protein"/>
    <property type="evidence" value="ECO:0007669"/>
    <property type="project" value="UniProtKB-ARBA"/>
</dbReference>
<dbReference type="GO" id="GO:0003676">
    <property type="term" value="F:nucleic acid binding"/>
    <property type="evidence" value="ECO:0007669"/>
    <property type="project" value="InterPro"/>
</dbReference>
<dbReference type="GO" id="GO:0016740">
    <property type="term" value="F:transferase activity"/>
    <property type="evidence" value="ECO:0007669"/>
    <property type="project" value="UniProtKB-ARBA"/>
</dbReference>
<dbReference type="GO" id="GO:0006421">
    <property type="term" value="P:asparaginyl-tRNA aminoacylation"/>
    <property type="evidence" value="ECO:0007669"/>
    <property type="project" value="UniProtKB-UniRule"/>
</dbReference>
<dbReference type="CDD" id="cd00776">
    <property type="entry name" value="AsxRS_core"/>
    <property type="match status" value="1"/>
</dbReference>
<dbReference type="CDD" id="cd04318">
    <property type="entry name" value="EcAsnRS_like_N"/>
    <property type="match status" value="1"/>
</dbReference>
<dbReference type="FunFam" id="3.30.930.10:FF:000016">
    <property type="entry name" value="Asparagine--tRNA ligase"/>
    <property type="match status" value="1"/>
</dbReference>
<dbReference type="Gene3D" id="3.30.930.10">
    <property type="entry name" value="Bira Bifunctional Protein, Domain 2"/>
    <property type="match status" value="1"/>
</dbReference>
<dbReference type="Gene3D" id="2.40.50.140">
    <property type="entry name" value="Nucleic acid-binding proteins"/>
    <property type="match status" value="1"/>
</dbReference>
<dbReference type="HAMAP" id="MF_00534">
    <property type="entry name" value="Asn_tRNA_synth"/>
    <property type="match status" value="1"/>
</dbReference>
<dbReference type="InterPro" id="IPR004364">
    <property type="entry name" value="Aa-tRNA-synt_II"/>
</dbReference>
<dbReference type="InterPro" id="IPR006195">
    <property type="entry name" value="aa-tRNA-synth_II"/>
</dbReference>
<dbReference type="InterPro" id="IPR045864">
    <property type="entry name" value="aa-tRNA-synth_II/BPL/LPL"/>
</dbReference>
<dbReference type="InterPro" id="IPR004522">
    <property type="entry name" value="Asn-tRNA-ligase"/>
</dbReference>
<dbReference type="InterPro" id="IPR002312">
    <property type="entry name" value="Asp/Asn-tRNA-synth_IIb"/>
</dbReference>
<dbReference type="InterPro" id="IPR012340">
    <property type="entry name" value="NA-bd_OB-fold"/>
</dbReference>
<dbReference type="InterPro" id="IPR004365">
    <property type="entry name" value="NA-bd_OB_tRNA"/>
</dbReference>
<dbReference type="NCBIfam" id="TIGR00457">
    <property type="entry name" value="asnS"/>
    <property type="match status" value="1"/>
</dbReference>
<dbReference type="NCBIfam" id="NF003037">
    <property type="entry name" value="PRK03932.1"/>
    <property type="match status" value="1"/>
</dbReference>
<dbReference type="PANTHER" id="PTHR22594:SF34">
    <property type="entry name" value="ASPARAGINE--TRNA LIGASE, MITOCHONDRIAL-RELATED"/>
    <property type="match status" value="1"/>
</dbReference>
<dbReference type="PANTHER" id="PTHR22594">
    <property type="entry name" value="ASPARTYL/LYSYL-TRNA SYNTHETASE"/>
    <property type="match status" value="1"/>
</dbReference>
<dbReference type="Pfam" id="PF00152">
    <property type="entry name" value="tRNA-synt_2"/>
    <property type="match status" value="1"/>
</dbReference>
<dbReference type="Pfam" id="PF01336">
    <property type="entry name" value="tRNA_anti-codon"/>
    <property type="match status" value="1"/>
</dbReference>
<dbReference type="PRINTS" id="PR01042">
    <property type="entry name" value="TRNASYNTHASP"/>
</dbReference>
<dbReference type="SUPFAM" id="SSF55681">
    <property type="entry name" value="Class II aaRS and biotin synthetases"/>
    <property type="match status" value="1"/>
</dbReference>
<dbReference type="SUPFAM" id="SSF50249">
    <property type="entry name" value="Nucleic acid-binding proteins"/>
    <property type="match status" value="1"/>
</dbReference>
<dbReference type="PROSITE" id="PS50862">
    <property type="entry name" value="AA_TRNA_LIGASE_II"/>
    <property type="match status" value="1"/>
</dbReference>
<evidence type="ECO:0000255" key="1">
    <source>
        <dbReference type="HAMAP-Rule" id="MF_00534"/>
    </source>
</evidence>
<protein>
    <recommendedName>
        <fullName evidence="1">Asparagine--tRNA ligase</fullName>
        <ecNumber evidence="1">6.1.1.22</ecNumber>
    </recommendedName>
    <alternativeName>
        <fullName evidence="1">Asparaginyl-tRNA synthetase</fullName>
        <shortName evidence="1">AsnRS</shortName>
    </alternativeName>
</protein>
<comment type="catalytic activity">
    <reaction evidence="1">
        <text>tRNA(Asn) + L-asparagine + ATP = L-asparaginyl-tRNA(Asn) + AMP + diphosphate + H(+)</text>
        <dbReference type="Rhea" id="RHEA:11180"/>
        <dbReference type="Rhea" id="RHEA-COMP:9659"/>
        <dbReference type="Rhea" id="RHEA-COMP:9674"/>
        <dbReference type="ChEBI" id="CHEBI:15378"/>
        <dbReference type="ChEBI" id="CHEBI:30616"/>
        <dbReference type="ChEBI" id="CHEBI:33019"/>
        <dbReference type="ChEBI" id="CHEBI:58048"/>
        <dbReference type="ChEBI" id="CHEBI:78442"/>
        <dbReference type="ChEBI" id="CHEBI:78515"/>
        <dbReference type="ChEBI" id="CHEBI:456215"/>
        <dbReference type="EC" id="6.1.1.22"/>
    </reaction>
</comment>
<comment type="subunit">
    <text evidence="1">Homodimer.</text>
</comment>
<comment type="subcellular location">
    <subcellularLocation>
        <location evidence="1">Cytoplasm</location>
    </subcellularLocation>
</comment>
<comment type="similarity">
    <text evidence="1">Belongs to the class-II aminoacyl-tRNA synthetase family.</text>
</comment>
<feature type="chain" id="PRO_1000061016" description="Asparagine--tRNA ligase">
    <location>
        <begin position="1"/>
        <end position="463"/>
    </location>
</feature>
<keyword id="KW-0030">Aminoacyl-tRNA synthetase</keyword>
<keyword id="KW-0067">ATP-binding</keyword>
<keyword id="KW-0963">Cytoplasm</keyword>
<keyword id="KW-0436">Ligase</keyword>
<keyword id="KW-0547">Nucleotide-binding</keyword>
<keyword id="KW-0648">Protein biosynthesis</keyword>
<keyword id="KW-1185">Reference proteome</keyword>
<gene>
    <name evidence="1" type="primary">asnS</name>
    <name type="ordered locus">Amet_4217</name>
</gene>